<proteinExistence type="evidence at transcript level"/>
<sequence>MAVPITVLDCDLLLYGRGHRTLDRFRLDDVTDDYLVTTYGFPRPFIDYLVDLLGASLSRPTHRSRAISPETQIMAALGFYTSGSFQTRMGDTIGISQASMSRCVTNVTEALVERASQFISFPRDERSVQGLKDEFYNLAGVPGVLGVVDCTQVNIKAPNSEDLSYVNSRGLHSLNCLLVCDARGSLLWAETSRLGSMQDNAVLHQSELSGLFETKMHKQGWLLADNAFILRPWLMTPVQIPESPSDYRYNMAHTATHSVMERTQRSLRLRFRCLDGSRATLQYSPEKSAQIVLACCILHNIALQHDLDIVSESGATSLEPEEECVHMEPLESEAYRMRQELILTHFS</sequence>
<feature type="chain" id="PRO_0000263617" description="Putative nuclease HARBI1">
    <location>
        <begin position="1"/>
        <end position="347"/>
    </location>
</feature>
<feature type="domain" description="DDE Tnp4" evidence="2">
    <location>
        <begin position="148"/>
        <end position="300"/>
    </location>
</feature>
<feature type="binding site" evidence="2">
    <location>
        <position position="149"/>
    </location>
    <ligand>
        <name>a divalent metal cation</name>
        <dbReference type="ChEBI" id="CHEBI:60240"/>
    </ligand>
</feature>
<feature type="binding site" evidence="2">
    <location>
        <position position="199"/>
    </location>
    <ligand>
        <name>a divalent metal cation</name>
        <dbReference type="ChEBI" id="CHEBI:60240"/>
    </ligand>
</feature>
<feature type="binding site" evidence="2">
    <location>
        <position position="225"/>
    </location>
    <ligand>
        <name>a divalent metal cation</name>
        <dbReference type="ChEBI" id="CHEBI:60240"/>
    </ligand>
</feature>
<feature type="binding site" evidence="2">
    <location>
        <position position="261"/>
    </location>
    <ligand>
        <name>a divalent metal cation</name>
        <dbReference type="ChEBI" id="CHEBI:60240"/>
    </ligand>
</feature>
<dbReference type="EC" id="3.1.-.-"/>
<dbReference type="EMBL" id="BC084846">
    <property type="protein sequence ID" value="AAH84846.1"/>
    <property type="molecule type" value="mRNA"/>
</dbReference>
<dbReference type="RefSeq" id="NP_001088509.1">
    <property type="nucleotide sequence ID" value="NM_001095040.1"/>
</dbReference>
<dbReference type="RefSeq" id="XP_018112355.1">
    <property type="nucleotide sequence ID" value="XM_018256866.1"/>
</dbReference>
<dbReference type="RefSeq" id="XP_018112356.1">
    <property type="nucleotide sequence ID" value="XM_018256867.1"/>
</dbReference>
<dbReference type="RefSeq" id="XP_018112357.1">
    <property type="nucleotide sequence ID" value="XM_018256868.1"/>
</dbReference>
<dbReference type="RefSeq" id="XP_018112358.1">
    <property type="nucleotide sequence ID" value="XM_018256869.1"/>
</dbReference>
<dbReference type="RefSeq" id="XP_018112359.1">
    <property type="nucleotide sequence ID" value="XM_018256870.1"/>
</dbReference>
<dbReference type="DNASU" id="495378"/>
<dbReference type="GeneID" id="495378"/>
<dbReference type="KEGG" id="xla:495378"/>
<dbReference type="AGR" id="Xenbase:XB-GENE-6077434"/>
<dbReference type="CTD" id="495378"/>
<dbReference type="Xenbase" id="XB-GENE-6077434">
    <property type="gene designation" value="harbi1.L"/>
</dbReference>
<dbReference type="OrthoDB" id="10062286at2759"/>
<dbReference type="Proteomes" id="UP000186698">
    <property type="component" value="Chromosome 4L"/>
</dbReference>
<dbReference type="Bgee" id="495378">
    <property type="expression patterns" value="Expressed in egg cell and 19 other cell types or tissues"/>
</dbReference>
<dbReference type="GO" id="GO:0005737">
    <property type="term" value="C:cytoplasm"/>
    <property type="evidence" value="ECO:0007669"/>
    <property type="project" value="UniProtKB-SubCell"/>
</dbReference>
<dbReference type="GO" id="GO:0005634">
    <property type="term" value="C:nucleus"/>
    <property type="evidence" value="ECO:0007669"/>
    <property type="project" value="UniProtKB-SubCell"/>
</dbReference>
<dbReference type="GO" id="GO:0046872">
    <property type="term" value="F:metal ion binding"/>
    <property type="evidence" value="ECO:0007669"/>
    <property type="project" value="UniProtKB-KW"/>
</dbReference>
<dbReference type="GO" id="GO:0004518">
    <property type="term" value="F:nuclease activity"/>
    <property type="evidence" value="ECO:0007669"/>
    <property type="project" value="UniProtKB-KW"/>
</dbReference>
<dbReference type="InterPro" id="IPR045249">
    <property type="entry name" value="HARBI1-like"/>
</dbReference>
<dbReference type="InterPro" id="IPR026103">
    <property type="entry name" value="HARBI1_animal"/>
</dbReference>
<dbReference type="InterPro" id="IPR027806">
    <property type="entry name" value="HARBI1_dom"/>
</dbReference>
<dbReference type="PANTHER" id="PTHR22930">
    <property type="match status" value="1"/>
</dbReference>
<dbReference type="PANTHER" id="PTHR22930:SF253">
    <property type="entry name" value="NUCLEASE HARBI1-RELATED"/>
    <property type="match status" value="1"/>
</dbReference>
<dbReference type="Pfam" id="PF13359">
    <property type="entry name" value="DDE_Tnp_4"/>
    <property type="match status" value="1"/>
</dbReference>
<dbReference type="PRINTS" id="PR02086">
    <property type="entry name" value="PUTNUCHARBI1"/>
</dbReference>
<protein>
    <recommendedName>
        <fullName>Putative nuclease HARBI1</fullName>
        <ecNumber>3.1.-.-</ecNumber>
    </recommendedName>
    <alternativeName>
        <fullName>Harbinger transposase-derived nuclease</fullName>
    </alternativeName>
</protein>
<keyword id="KW-0963">Cytoplasm</keyword>
<keyword id="KW-0378">Hydrolase</keyword>
<keyword id="KW-0479">Metal-binding</keyword>
<keyword id="KW-0540">Nuclease</keyword>
<keyword id="KW-0539">Nucleus</keyword>
<keyword id="KW-1185">Reference proteome</keyword>
<name>HARB1_XENLA</name>
<comment type="function">
    <text evidence="1 4">Transposase-derived protein that may have nuclease activity (Potential). Does not have transposase activity (By similarity).</text>
</comment>
<comment type="cofactor">
    <cofactor evidence="4">
        <name>a divalent metal cation</name>
        <dbReference type="ChEBI" id="CHEBI:60240"/>
    </cofactor>
</comment>
<comment type="subcellular location">
    <subcellularLocation>
        <location evidence="1">Nucleus</location>
    </subcellularLocation>
    <subcellularLocation>
        <location evidence="1">Cytoplasm</location>
    </subcellularLocation>
</comment>
<comment type="tissue specificity">
    <text evidence="3">Detected in adult eye and in embryo.</text>
</comment>
<comment type="similarity">
    <text evidence="4">Belongs to the HARBI1 family.</text>
</comment>
<organism>
    <name type="scientific">Xenopus laevis</name>
    <name type="common">African clawed frog</name>
    <dbReference type="NCBI Taxonomy" id="8355"/>
    <lineage>
        <taxon>Eukaryota</taxon>
        <taxon>Metazoa</taxon>
        <taxon>Chordata</taxon>
        <taxon>Craniata</taxon>
        <taxon>Vertebrata</taxon>
        <taxon>Euteleostomi</taxon>
        <taxon>Amphibia</taxon>
        <taxon>Batrachia</taxon>
        <taxon>Anura</taxon>
        <taxon>Pipoidea</taxon>
        <taxon>Pipidae</taxon>
        <taxon>Xenopodinae</taxon>
        <taxon>Xenopus</taxon>
        <taxon>Xenopus</taxon>
    </lineage>
</organism>
<accession>Q5U538</accession>
<gene>
    <name type="primary">harbi1</name>
</gene>
<evidence type="ECO:0000250" key="1"/>
<evidence type="ECO:0000255" key="2"/>
<evidence type="ECO:0000269" key="3">
    <source>
    </source>
</evidence>
<evidence type="ECO:0000305" key="4"/>
<reference key="1">
    <citation type="submission" date="2004-10" db="EMBL/GenBank/DDBJ databases">
        <authorList>
            <consortium name="NIH - Xenopus Gene Collection (XGC) project"/>
        </authorList>
    </citation>
    <scope>NUCLEOTIDE SEQUENCE [LARGE SCALE MRNA]</scope>
</reference>
<reference key="2">
    <citation type="journal article" date="2004" name="DNA Cell Biol.">
        <title>Harbinger transposons and an ancient HARBI1 gene derived from a transposase.</title>
        <authorList>
            <person name="Kapitonov V.V."/>
            <person name="Jurka J."/>
        </authorList>
    </citation>
    <scope>TISSUE SPECIFICITY</scope>
</reference>